<keyword id="KW-0378">Hydrolase</keyword>
<keyword id="KW-0460">Magnesium</keyword>
<keyword id="KW-0479">Metal-binding</keyword>
<keyword id="KW-0546">Nucleotide metabolism</keyword>
<keyword id="KW-0547">Nucleotide-binding</keyword>
<keyword id="KW-1185">Reference proteome</keyword>
<protein>
    <recommendedName>
        <fullName evidence="1">dITP/XTP pyrophosphatase</fullName>
        <ecNumber evidence="1">3.6.1.66</ecNumber>
    </recommendedName>
    <alternativeName>
        <fullName evidence="1">Non-canonical purine NTP pyrophosphatase</fullName>
    </alternativeName>
    <alternativeName>
        <fullName evidence="1">Non-standard purine NTP pyrophosphatase</fullName>
    </alternativeName>
    <alternativeName>
        <fullName evidence="1">Nucleoside-triphosphate diphosphatase</fullName>
    </alternativeName>
    <alternativeName>
        <fullName evidence="1">Nucleoside-triphosphate pyrophosphatase</fullName>
        <shortName evidence="1">NTPase</shortName>
    </alternativeName>
</protein>
<dbReference type="EC" id="3.6.1.66" evidence="1"/>
<dbReference type="EMBL" id="AP006878">
    <property type="protein sequence ID" value="BAD86300.1"/>
    <property type="molecule type" value="Genomic_DNA"/>
</dbReference>
<dbReference type="RefSeq" id="WP_011251061.1">
    <property type="nucleotide sequence ID" value="NC_006624.1"/>
</dbReference>
<dbReference type="SMR" id="Q5JEX8"/>
<dbReference type="FunCoup" id="Q5JEX8">
    <property type="interactions" value="206"/>
</dbReference>
<dbReference type="STRING" id="69014.TK2111"/>
<dbReference type="EnsemblBacteria" id="BAD86300">
    <property type="protein sequence ID" value="BAD86300"/>
    <property type="gene ID" value="TK2111"/>
</dbReference>
<dbReference type="GeneID" id="78448646"/>
<dbReference type="KEGG" id="tko:TK2111"/>
<dbReference type="PATRIC" id="fig|69014.16.peg.2067"/>
<dbReference type="eggNOG" id="arCOG04184">
    <property type="taxonomic scope" value="Archaea"/>
</dbReference>
<dbReference type="HOGENOM" id="CLU_082080_1_0_2"/>
<dbReference type="InParanoid" id="Q5JEX8"/>
<dbReference type="OrthoDB" id="372108at2157"/>
<dbReference type="PhylomeDB" id="Q5JEX8"/>
<dbReference type="Proteomes" id="UP000000536">
    <property type="component" value="Chromosome"/>
</dbReference>
<dbReference type="GO" id="GO:0005737">
    <property type="term" value="C:cytoplasm"/>
    <property type="evidence" value="ECO:0000318"/>
    <property type="project" value="GO_Central"/>
</dbReference>
<dbReference type="GO" id="GO:0035870">
    <property type="term" value="F:dITP diphosphatase activity"/>
    <property type="evidence" value="ECO:0007669"/>
    <property type="project" value="RHEA"/>
</dbReference>
<dbReference type="GO" id="GO:0036220">
    <property type="term" value="F:ITP diphosphatase activity"/>
    <property type="evidence" value="ECO:0007669"/>
    <property type="project" value="UniProtKB-EC"/>
</dbReference>
<dbReference type="GO" id="GO:0046872">
    <property type="term" value="F:metal ion binding"/>
    <property type="evidence" value="ECO:0007669"/>
    <property type="project" value="UniProtKB-KW"/>
</dbReference>
<dbReference type="GO" id="GO:0047429">
    <property type="term" value="F:nucleoside triphosphate diphosphatase activity"/>
    <property type="evidence" value="ECO:0000318"/>
    <property type="project" value="GO_Central"/>
</dbReference>
<dbReference type="GO" id="GO:0000166">
    <property type="term" value="F:nucleotide binding"/>
    <property type="evidence" value="ECO:0007669"/>
    <property type="project" value="UniProtKB-KW"/>
</dbReference>
<dbReference type="GO" id="GO:0017111">
    <property type="term" value="F:ribonucleoside triphosphate phosphatase activity"/>
    <property type="evidence" value="ECO:0007669"/>
    <property type="project" value="InterPro"/>
</dbReference>
<dbReference type="GO" id="GO:0036222">
    <property type="term" value="F:XTP diphosphatase activity"/>
    <property type="evidence" value="ECO:0007669"/>
    <property type="project" value="RHEA"/>
</dbReference>
<dbReference type="GO" id="GO:0009143">
    <property type="term" value="P:nucleoside triphosphate catabolic process"/>
    <property type="evidence" value="ECO:0000318"/>
    <property type="project" value="GO_Central"/>
</dbReference>
<dbReference type="GO" id="GO:0009117">
    <property type="term" value="P:nucleotide metabolic process"/>
    <property type="evidence" value="ECO:0007669"/>
    <property type="project" value="UniProtKB-KW"/>
</dbReference>
<dbReference type="GO" id="GO:0009146">
    <property type="term" value="P:purine nucleoside triphosphate catabolic process"/>
    <property type="evidence" value="ECO:0007669"/>
    <property type="project" value="UniProtKB-UniRule"/>
</dbReference>
<dbReference type="CDD" id="cd00515">
    <property type="entry name" value="HAM1"/>
    <property type="match status" value="1"/>
</dbReference>
<dbReference type="FunFam" id="3.90.950.10:FF:000001">
    <property type="entry name" value="dITP/XTP pyrophosphatase"/>
    <property type="match status" value="1"/>
</dbReference>
<dbReference type="Gene3D" id="3.90.950.10">
    <property type="match status" value="1"/>
</dbReference>
<dbReference type="HAMAP" id="MF_01405">
    <property type="entry name" value="Non_canon_purine_NTPase"/>
    <property type="match status" value="1"/>
</dbReference>
<dbReference type="InterPro" id="IPR020922">
    <property type="entry name" value="dITP/XTP_pyrophosphatase"/>
</dbReference>
<dbReference type="InterPro" id="IPR029001">
    <property type="entry name" value="ITPase-like_fam"/>
</dbReference>
<dbReference type="InterPro" id="IPR002637">
    <property type="entry name" value="RdgB/HAM1"/>
</dbReference>
<dbReference type="NCBIfam" id="NF011396">
    <property type="entry name" value="PRK14821.1"/>
    <property type="match status" value="1"/>
</dbReference>
<dbReference type="NCBIfam" id="TIGR00042">
    <property type="entry name" value="RdgB/HAM1 family non-canonical purine NTP pyrophosphatase"/>
    <property type="match status" value="1"/>
</dbReference>
<dbReference type="PANTHER" id="PTHR11067:SF9">
    <property type="entry name" value="INOSINE TRIPHOSPHATE PYROPHOSPHATASE"/>
    <property type="match status" value="1"/>
</dbReference>
<dbReference type="PANTHER" id="PTHR11067">
    <property type="entry name" value="INOSINE TRIPHOSPHATE PYROPHOSPHATASE/HAM1 PROTEIN"/>
    <property type="match status" value="1"/>
</dbReference>
<dbReference type="Pfam" id="PF01725">
    <property type="entry name" value="Ham1p_like"/>
    <property type="match status" value="1"/>
</dbReference>
<dbReference type="SUPFAM" id="SSF52972">
    <property type="entry name" value="ITPase-like"/>
    <property type="match status" value="1"/>
</dbReference>
<comment type="function">
    <text evidence="1">Pyrophosphatase that catalyzes the hydrolysis of nucleoside triphosphates to their monophosphate derivatives, with a high preference for the non-canonical purine nucleotides XTP (xanthosine triphosphate), dITP (deoxyinosine triphosphate) and ITP. Seems to function as a house-cleaning enzyme that removes non-canonical purine nucleotides from the nucleotide pool, thus preventing their incorporation into DNA/RNA and avoiding chromosomal lesions.</text>
</comment>
<comment type="catalytic activity">
    <reaction evidence="1">
        <text>XTP + H2O = XMP + diphosphate + H(+)</text>
        <dbReference type="Rhea" id="RHEA:28610"/>
        <dbReference type="ChEBI" id="CHEBI:15377"/>
        <dbReference type="ChEBI" id="CHEBI:15378"/>
        <dbReference type="ChEBI" id="CHEBI:33019"/>
        <dbReference type="ChEBI" id="CHEBI:57464"/>
        <dbReference type="ChEBI" id="CHEBI:61314"/>
        <dbReference type="EC" id="3.6.1.66"/>
    </reaction>
</comment>
<comment type="catalytic activity">
    <reaction evidence="1">
        <text>dITP + H2O = dIMP + diphosphate + H(+)</text>
        <dbReference type="Rhea" id="RHEA:28342"/>
        <dbReference type="ChEBI" id="CHEBI:15377"/>
        <dbReference type="ChEBI" id="CHEBI:15378"/>
        <dbReference type="ChEBI" id="CHEBI:33019"/>
        <dbReference type="ChEBI" id="CHEBI:61194"/>
        <dbReference type="ChEBI" id="CHEBI:61382"/>
        <dbReference type="EC" id="3.6.1.66"/>
    </reaction>
</comment>
<comment type="catalytic activity">
    <reaction evidence="1">
        <text>ITP + H2O = IMP + diphosphate + H(+)</text>
        <dbReference type="Rhea" id="RHEA:29399"/>
        <dbReference type="ChEBI" id="CHEBI:15377"/>
        <dbReference type="ChEBI" id="CHEBI:15378"/>
        <dbReference type="ChEBI" id="CHEBI:33019"/>
        <dbReference type="ChEBI" id="CHEBI:58053"/>
        <dbReference type="ChEBI" id="CHEBI:61402"/>
        <dbReference type="EC" id="3.6.1.66"/>
    </reaction>
</comment>
<comment type="cofactor">
    <cofactor evidence="1">
        <name>Mg(2+)</name>
        <dbReference type="ChEBI" id="CHEBI:18420"/>
    </cofactor>
    <text evidence="1">Binds 1 Mg(2+) ion per subunit.</text>
</comment>
<comment type="subunit">
    <text evidence="1">Homodimer.</text>
</comment>
<comment type="similarity">
    <text evidence="1">Belongs to the HAM1 NTPase family.</text>
</comment>
<sequence length="184" mass="20928">MRLAFVTSNPGKVEEARKYFEPLGVEVYQLKVSYPEIQADTLEEVAEYGAKWLAQRVDGPFFLDDSGLFVEALKGFPGVYSAYVYKTIGYQGILKLLQGEKNRKAHFKSVIAYWDGELHIFTGRVDGKIATEPRGSGGFGFDPIFIPEGFDRTFAEMTTEEKNRISHRGRALREFANWLKENLK</sequence>
<proteinExistence type="inferred from homology"/>
<gene>
    <name type="ordered locus">TK2111</name>
</gene>
<organism>
    <name type="scientific">Thermococcus kodakarensis (strain ATCC BAA-918 / JCM 12380 / KOD1)</name>
    <name type="common">Pyrococcus kodakaraensis (strain KOD1)</name>
    <dbReference type="NCBI Taxonomy" id="69014"/>
    <lineage>
        <taxon>Archaea</taxon>
        <taxon>Methanobacteriati</taxon>
        <taxon>Methanobacteriota</taxon>
        <taxon>Thermococci</taxon>
        <taxon>Thermococcales</taxon>
        <taxon>Thermococcaceae</taxon>
        <taxon>Thermococcus</taxon>
    </lineage>
</organism>
<evidence type="ECO:0000255" key="1">
    <source>
        <dbReference type="HAMAP-Rule" id="MF_01405"/>
    </source>
</evidence>
<name>IXTPA_THEKO</name>
<accession>Q5JEX8</accession>
<reference key="1">
    <citation type="journal article" date="2005" name="Genome Res.">
        <title>Complete genome sequence of the hyperthermophilic archaeon Thermococcus kodakaraensis KOD1 and comparison with Pyrococcus genomes.</title>
        <authorList>
            <person name="Fukui T."/>
            <person name="Atomi H."/>
            <person name="Kanai T."/>
            <person name="Matsumi R."/>
            <person name="Fujiwara S."/>
            <person name="Imanaka T."/>
        </authorList>
    </citation>
    <scope>NUCLEOTIDE SEQUENCE [LARGE SCALE GENOMIC DNA]</scope>
    <source>
        <strain>ATCC BAA-918 / JCM 12380 / KOD1</strain>
    </source>
</reference>
<feature type="chain" id="PRO_0000178278" description="dITP/XTP pyrophosphatase">
    <location>
        <begin position="1"/>
        <end position="184"/>
    </location>
</feature>
<feature type="active site" description="Proton acceptor" evidence="1">
    <location>
        <position position="65"/>
    </location>
</feature>
<feature type="binding site" evidence="1">
    <location>
        <begin position="7"/>
        <end position="12"/>
    </location>
    <ligand>
        <name>substrate</name>
    </ligand>
</feature>
<feature type="binding site" evidence="1">
    <location>
        <position position="36"/>
    </location>
    <ligand>
        <name>Mg(2+)</name>
        <dbReference type="ChEBI" id="CHEBI:18420"/>
    </ligand>
</feature>
<feature type="binding site" evidence="1">
    <location>
        <position position="65"/>
    </location>
    <ligand>
        <name>Mg(2+)</name>
        <dbReference type="ChEBI" id="CHEBI:18420"/>
    </ligand>
</feature>
<feature type="binding site" evidence="1">
    <location>
        <position position="66"/>
    </location>
    <ligand>
        <name>substrate</name>
    </ligand>
</feature>
<feature type="binding site" evidence="1">
    <location>
        <begin position="139"/>
        <end position="142"/>
    </location>
    <ligand>
        <name>substrate</name>
    </ligand>
</feature>
<feature type="binding site" evidence="1">
    <location>
        <position position="162"/>
    </location>
    <ligand>
        <name>substrate</name>
    </ligand>
</feature>
<feature type="binding site" evidence="1">
    <location>
        <begin position="167"/>
        <end position="168"/>
    </location>
    <ligand>
        <name>substrate</name>
    </ligand>
</feature>